<comment type="function">
    <text evidence="1 5">Co-chaperone for Hsp70 protein HSPA5/BiP that acts as a key repressor of the ERN1/IRE1-mediated unfolded protein response (UPR) (PubMed:29198525). J domain-containing co-chaperones stimulate the ATPase activity of Hsp70 proteins and are required for efficient substrate recognition by Hsp70 proteins (PubMed:29198525). In the unstressed endoplasmic reticulum, interacts with the luminal region of ERN1/IRE1 and selectively recruits HSPA5/BiP: HSPA5/BiP disrupts the dimerization of the active ERN1/IRE1 luminal region, thereby inactivating ERN1/IRE1 (PubMed:29198525). Also involved in endoplasmic reticulum-associated degradation (ERAD) of misfolded proteins (By similarity). Required for survival of B-cell progenitors and normal antibody production (By similarity).</text>
</comment>
<comment type="subunit">
    <text evidence="1 5">Interacts with HSPA5/BiP; interaction is direct (PubMed:29198525). Interacts with ERN1/IRE1 (via the luminal region) (PubMed:29198525). Interacts with DERL1 (By similarity).</text>
</comment>
<comment type="subcellular location">
    <subcellularLocation>
        <location evidence="1">Endoplasmic reticulum lumen</location>
    </subcellularLocation>
</comment>
<comment type="domain">
    <text evidence="1">The J domain stimulates the ATPase activity of HSPA5/BiP, while the divergent targeting domain is required for efficient substrate recognition by HSPA5/BiP. The divergent targeting domain specifically recognizes and binds to aggregation-prone sequences.</text>
</comment>
<keyword id="KW-0143">Chaperone</keyword>
<keyword id="KW-0256">Endoplasmic reticulum</keyword>
<keyword id="KW-0597">Phosphoprotein</keyword>
<keyword id="KW-1185">Reference proteome</keyword>
<keyword id="KW-0732">Signal</keyword>
<keyword id="KW-0834">Unfolded protein response</keyword>
<dbReference type="EMBL" id="JH000095">
    <property type="protein sequence ID" value="EGV93680.1"/>
    <property type="molecule type" value="Genomic_DNA"/>
</dbReference>
<dbReference type="SMR" id="G3H0N9"/>
<dbReference type="FunCoup" id="G3H0N9">
    <property type="interactions" value="916"/>
</dbReference>
<dbReference type="STRING" id="10029.G3H0N9"/>
<dbReference type="PaxDb" id="10029-XP_007609132.1"/>
<dbReference type="Ensembl" id="ENSCGRT00001007751.1">
    <property type="protein sequence ID" value="ENSCGRP00001005077.1"/>
    <property type="gene ID" value="ENSCGRG00001006614.1"/>
</dbReference>
<dbReference type="eggNOG" id="KOG0714">
    <property type="taxonomic scope" value="Eukaryota"/>
</dbReference>
<dbReference type="GeneTree" id="ENSGT00940000156246"/>
<dbReference type="InParanoid" id="G3H0N9"/>
<dbReference type="OMA" id="YNFRQHY"/>
<dbReference type="OrthoDB" id="376357at2759"/>
<dbReference type="Proteomes" id="UP000001075">
    <property type="component" value="Unassembled WGS sequence"/>
</dbReference>
<dbReference type="Proteomes" id="UP000694386">
    <property type="component" value="Unplaced"/>
</dbReference>
<dbReference type="Proteomes" id="UP001108280">
    <property type="component" value="Unplaced"/>
</dbReference>
<dbReference type="GO" id="GO:0005783">
    <property type="term" value="C:endoplasmic reticulum"/>
    <property type="evidence" value="ECO:0000250"/>
    <property type="project" value="UniProtKB"/>
</dbReference>
<dbReference type="GO" id="GO:0005788">
    <property type="term" value="C:endoplasmic reticulum lumen"/>
    <property type="evidence" value="ECO:0007669"/>
    <property type="project" value="UniProtKB-SubCell"/>
</dbReference>
<dbReference type="GO" id="GO:0030544">
    <property type="term" value="F:Hsp70 protein binding"/>
    <property type="evidence" value="ECO:0000353"/>
    <property type="project" value="UniProtKB"/>
</dbReference>
<dbReference type="GO" id="GO:0051787">
    <property type="term" value="F:misfolded protein binding"/>
    <property type="evidence" value="ECO:0007669"/>
    <property type="project" value="Ensembl"/>
</dbReference>
<dbReference type="GO" id="GO:0051087">
    <property type="term" value="F:protein-folding chaperone binding"/>
    <property type="evidence" value="ECO:0000314"/>
    <property type="project" value="UniProtKB"/>
</dbReference>
<dbReference type="GO" id="GO:0030183">
    <property type="term" value="P:B cell differentiation"/>
    <property type="evidence" value="ECO:0000250"/>
    <property type="project" value="UniProtKB"/>
</dbReference>
<dbReference type="GO" id="GO:0036503">
    <property type="term" value="P:ERAD pathway"/>
    <property type="evidence" value="ECO:0007669"/>
    <property type="project" value="Ensembl"/>
</dbReference>
<dbReference type="GO" id="GO:1903895">
    <property type="term" value="P:negative regulation of IRE1-mediated unfolded protein response"/>
    <property type="evidence" value="ECO:0000314"/>
    <property type="project" value="UniProtKB"/>
</dbReference>
<dbReference type="GO" id="GO:0002639">
    <property type="term" value="P:positive regulation of immunoglobulin production"/>
    <property type="evidence" value="ECO:0000250"/>
    <property type="project" value="UniProtKB"/>
</dbReference>
<dbReference type="GO" id="GO:0034976">
    <property type="term" value="P:response to endoplasmic reticulum stress"/>
    <property type="evidence" value="ECO:0000250"/>
    <property type="project" value="UniProtKB"/>
</dbReference>
<dbReference type="GO" id="GO:0006986">
    <property type="term" value="P:response to unfolded protein"/>
    <property type="evidence" value="ECO:0007669"/>
    <property type="project" value="UniProtKB-KW"/>
</dbReference>
<dbReference type="CDD" id="cd06257">
    <property type="entry name" value="DnaJ"/>
    <property type="match status" value="1"/>
</dbReference>
<dbReference type="FunFam" id="1.10.287.110:FF:000054">
    <property type="entry name" value="dnaJ homolog subfamily B member 9"/>
    <property type="match status" value="1"/>
</dbReference>
<dbReference type="Gene3D" id="1.10.287.110">
    <property type="entry name" value="DnaJ domain"/>
    <property type="match status" value="1"/>
</dbReference>
<dbReference type="InterPro" id="IPR001623">
    <property type="entry name" value="DnaJ_domain"/>
</dbReference>
<dbReference type="InterPro" id="IPR018253">
    <property type="entry name" value="DnaJ_domain_CS"/>
</dbReference>
<dbReference type="InterPro" id="IPR051948">
    <property type="entry name" value="Hsp70_co-chaperone_J-domain"/>
</dbReference>
<dbReference type="InterPro" id="IPR036869">
    <property type="entry name" value="J_dom_sf"/>
</dbReference>
<dbReference type="PANTHER" id="PTHR44360">
    <property type="entry name" value="DNAJ HOMOLOG SUBFAMILY B MEMBER 9"/>
    <property type="match status" value="1"/>
</dbReference>
<dbReference type="PANTHER" id="PTHR44360:SF1">
    <property type="entry name" value="DNAJ HOMOLOG SUBFAMILY B MEMBER 9"/>
    <property type="match status" value="1"/>
</dbReference>
<dbReference type="Pfam" id="PF00226">
    <property type="entry name" value="DnaJ"/>
    <property type="match status" value="1"/>
</dbReference>
<dbReference type="PRINTS" id="PR00625">
    <property type="entry name" value="JDOMAIN"/>
</dbReference>
<dbReference type="SMART" id="SM00271">
    <property type="entry name" value="DnaJ"/>
    <property type="match status" value="1"/>
</dbReference>
<dbReference type="SUPFAM" id="SSF46565">
    <property type="entry name" value="Chaperone J-domain"/>
    <property type="match status" value="1"/>
</dbReference>
<dbReference type="PROSITE" id="PS00636">
    <property type="entry name" value="DNAJ_1"/>
    <property type="match status" value="1"/>
</dbReference>
<dbReference type="PROSITE" id="PS50076">
    <property type="entry name" value="DNAJ_2"/>
    <property type="match status" value="1"/>
</dbReference>
<evidence type="ECO:0000250" key="1">
    <source>
        <dbReference type="UniProtKB" id="Q9QYI6"/>
    </source>
</evidence>
<evidence type="ECO:0000250" key="2">
    <source>
        <dbReference type="UniProtKB" id="Q9UBS3"/>
    </source>
</evidence>
<evidence type="ECO:0000255" key="3"/>
<evidence type="ECO:0000255" key="4">
    <source>
        <dbReference type="PROSITE-ProRule" id="PRU00286"/>
    </source>
</evidence>
<evidence type="ECO:0000269" key="5">
    <source>
    </source>
</evidence>
<evidence type="ECO:0000303" key="6">
    <source>
    </source>
</evidence>
<evidence type="ECO:0000312" key="7">
    <source>
        <dbReference type="EMBL" id="EGV93680.1"/>
    </source>
</evidence>
<organism>
    <name type="scientific">Cricetulus griseus</name>
    <name type="common">Chinese hamster</name>
    <name type="synonym">Cricetulus barabensis griseus</name>
    <dbReference type="NCBI Taxonomy" id="10029"/>
    <lineage>
        <taxon>Eukaryota</taxon>
        <taxon>Metazoa</taxon>
        <taxon>Chordata</taxon>
        <taxon>Craniata</taxon>
        <taxon>Vertebrata</taxon>
        <taxon>Euteleostomi</taxon>
        <taxon>Mammalia</taxon>
        <taxon>Eutheria</taxon>
        <taxon>Euarchontoglires</taxon>
        <taxon>Glires</taxon>
        <taxon>Rodentia</taxon>
        <taxon>Myomorpha</taxon>
        <taxon>Muroidea</taxon>
        <taxon>Cricetidae</taxon>
        <taxon>Cricetinae</taxon>
        <taxon>Cricetulus</taxon>
    </lineage>
</organism>
<feature type="signal peptide" evidence="3">
    <location>
        <begin position="1"/>
        <end position="23"/>
    </location>
</feature>
<feature type="chain" id="PRO_5003444047" description="DnaJ homolog subfamily B member 9" evidence="3">
    <location>
        <begin position="24"/>
        <end position="222"/>
    </location>
</feature>
<feature type="domain" description="J" evidence="4">
    <location>
        <begin position="26"/>
        <end position="90"/>
    </location>
</feature>
<feature type="region of interest" description="Divergent targeting domain" evidence="1">
    <location>
        <begin position="91"/>
        <end position="222"/>
    </location>
</feature>
<feature type="modified residue" description="Phosphoserine" evidence="2">
    <location>
        <position position="133"/>
    </location>
</feature>
<feature type="mutagenesis site" description="Abolishes ability to stimulate ATPase activity of HSPA5/BiP." evidence="5">
    <original>H</original>
    <variation>Q</variation>
    <location>
        <position position="54"/>
    </location>
</feature>
<proteinExistence type="evidence at protein level"/>
<accession>G3H0N9</accession>
<protein>
    <recommendedName>
        <fullName evidence="2">DnaJ homolog subfamily B member 9</fullName>
    </recommendedName>
    <alternativeName>
        <fullName evidence="6">Endoplasmic reticulum DNA J domain-containing protein 4</fullName>
        <shortName evidence="6">ER-resident protein ERdj4</shortName>
        <shortName evidence="6">ERdj4</shortName>
    </alternativeName>
</protein>
<sequence length="222" mass="25646">MATPQSVFVFAICILMITELILASKSYYDILGVPKSASERQIKKAFHKLAMKYHPDKNKSPDAEAKFREIAEAYETLSDAHRRKEYDTVGHTAFTNGKGQRGSGSPFEQSFNFNFDDLFKDFNLFGQNQNTRSKKHFENHFQTHQDGSNRQRHHFQEFSFGGGLFDDMFEDMEKMFSFSGFDTTNRHTVQTENRFHGSSKHCRTVTQRRGNMVTTYTDCSGQ</sequence>
<name>DNJB9_CRIGR</name>
<reference key="1">
    <citation type="journal article" date="2011" name="Nat. Biotechnol.">
        <title>The genomic sequence of the Chinese hamster ovary (CHO)-K1 cell line.</title>
        <authorList>
            <person name="Xu X."/>
            <person name="Nagarajan H."/>
            <person name="Lewis N.E."/>
            <person name="Pan S."/>
            <person name="Cai Z."/>
            <person name="Liu X."/>
            <person name="Chen W."/>
            <person name="Xie M."/>
            <person name="Wang W."/>
            <person name="Hammond S."/>
            <person name="Andersen M.R."/>
            <person name="Neff N."/>
            <person name="Passarelli B."/>
            <person name="Koh W."/>
            <person name="Fan H.C."/>
            <person name="Wang J."/>
            <person name="Gui Y."/>
            <person name="Lee K.H."/>
            <person name="Betenbaugh M.J."/>
            <person name="Quake S.R."/>
            <person name="Famili I."/>
            <person name="Palsson B.O."/>
            <person name="Wang J."/>
        </authorList>
    </citation>
    <scope>NUCLEOTIDE SEQUENCE [LARGE SCALE GENOMIC DNA]</scope>
</reference>
<reference key="2">
    <citation type="journal article" date="2017" name="Cell">
        <title>A J-Protein co-chaperone recruits bip to monomerize IRE1 and repress the unfolded protein response.</title>
        <authorList>
            <person name="Amin-Wetzel N."/>
            <person name="Saunders R.A."/>
            <person name="Kamphuis M.J."/>
            <person name="Rato C."/>
            <person name="Preissler S."/>
            <person name="Harding H.P."/>
            <person name="Ron D."/>
        </authorList>
    </citation>
    <scope>FUNCTION</scope>
    <scope>INTERACTION WITH HSPA5 AND ERN1</scope>
    <scope>MUTAGENESIS OF HIS-54</scope>
</reference>
<gene>
    <name evidence="2" type="primary">DNAJB9</name>
    <name evidence="7" type="ORF">I79_003703</name>
</gene>